<organism>
    <name type="scientific">Saccharomyces cerevisiae (strain ATCC 204508 / S288c)</name>
    <name type="common">Baker's yeast</name>
    <dbReference type="NCBI Taxonomy" id="559292"/>
    <lineage>
        <taxon>Eukaryota</taxon>
        <taxon>Fungi</taxon>
        <taxon>Dikarya</taxon>
        <taxon>Ascomycota</taxon>
        <taxon>Saccharomycotina</taxon>
        <taxon>Saccharomycetes</taxon>
        <taxon>Saccharomycetales</taxon>
        <taxon>Saccharomycetaceae</taxon>
        <taxon>Saccharomyces</taxon>
    </lineage>
</organism>
<proteinExistence type="evidence at protein level"/>
<feature type="initiator methionine" description="Removed" evidence="13">
    <location>
        <position position="1"/>
    </location>
</feature>
<feature type="chain" id="PRO_0000151664" description="Arginine--tRNA ligase, cytoplasmic">
    <location>
        <begin position="2"/>
        <end position="607"/>
    </location>
</feature>
<feature type="region of interest" description="Interaction with tRNA" evidence="3">
    <location>
        <begin position="59"/>
        <end position="60"/>
    </location>
</feature>
<feature type="region of interest" description="Interaction with tRNA" evidence="3">
    <location>
        <begin position="106"/>
        <end position="111"/>
    </location>
</feature>
<feature type="region of interest" description="Interaction with tRNA" evidence="3">
    <location>
        <begin position="484"/>
        <end position="498"/>
    </location>
</feature>
<feature type="short sequence motif" description="'HIGH' region">
    <location>
        <begin position="151"/>
        <end position="162"/>
    </location>
</feature>
<feature type="binding site" evidence="3 5 7 8">
    <location>
        <begin position="148"/>
        <end position="153"/>
    </location>
    <ligand>
        <name>L-arginine</name>
        <dbReference type="ChEBI" id="CHEBI:32682"/>
    </ligand>
</feature>
<feature type="binding site" evidence="5 7">
    <location>
        <position position="162"/>
    </location>
    <ligand>
        <name>L-arginine</name>
        <dbReference type="ChEBI" id="CHEBI:32682"/>
    </ligand>
</feature>
<feature type="binding site" evidence="3 5 7 8">
    <location>
        <position position="347"/>
    </location>
    <ligand>
        <name>L-arginine</name>
        <dbReference type="ChEBI" id="CHEBI:32682"/>
    </ligand>
</feature>
<feature type="binding site" evidence="3 5 7 8">
    <location>
        <position position="351"/>
    </location>
    <ligand>
        <name>L-arginine</name>
        <dbReference type="ChEBI" id="CHEBI:32682"/>
    </ligand>
</feature>
<feature type="binding site" evidence="3 5 7 8">
    <location>
        <position position="375"/>
    </location>
    <ligand>
        <name>L-arginine</name>
        <dbReference type="ChEBI" id="CHEBI:32682"/>
    </ligand>
</feature>
<feature type="modified residue" description="N-acetylalanine" evidence="13">
    <location>
        <position position="2"/>
    </location>
</feature>
<feature type="modified residue" description="Phosphoserine" evidence="10 11 12">
    <location>
        <position position="15"/>
    </location>
</feature>
<feature type="helix" evidence="15">
    <location>
        <begin position="3"/>
        <end position="13"/>
    </location>
</feature>
<feature type="helix" evidence="15">
    <location>
        <begin position="19"/>
        <end position="22"/>
    </location>
</feature>
<feature type="turn" evidence="15">
    <location>
        <begin position="27"/>
        <end position="29"/>
    </location>
</feature>
<feature type="helix" evidence="15">
    <location>
        <begin position="31"/>
        <end position="47"/>
    </location>
</feature>
<feature type="helix" evidence="15">
    <location>
        <begin position="51"/>
        <end position="54"/>
    </location>
</feature>
<feature type="helix" evidence="15">
    <location>
        <begin position="55"/>
        <end position="57"/>
    </location>
</feature>
<feature type="helix" evidence="15">
    <location>
        <begin position="64"/>
        <end position="66"/>
    </location>
</feature>
<feature type="strand" evidence="15">
    <location>
        <begin position="68"/>
        <end position="72"/>
    </location>
</feature>
<feature type="helix" evidence="15">
    <location>
        <begin position="73"/>
        <end position="76"/>
    </location>
</feature>
<feature type="helix" evidence="15">
    <location>
        <begin position="83"/>
        <end position="92"/>
    </location>
</feature>
<feature type="turn" evidence="15">
    <location>
        <begin position="97"/>
        <end position="99"/>
    </location>
</feature>
<feature type="strand" evidence="15">
    <location>
        <begin position="100"/>
        <end position="106"/>
    </location>
</feature>
<feature type="strand" evidence="15">
    <location>
        <begin position="109"/>
        <end position="114"/>
    </location>
</feature>
<feature type="helix" evidence="15">
    <location>
        <begin position="116"/>
        <end position="130"/>
    </location>
</feature>
<feature type="helix" evidence="15">
    <location>
        <begin position="131"/>
        <end position="133"/>
    </location>
</feature>
<feature type="strand" evidence="15">
    <location>
        <begin position="144"/>
        <end position="148"/>
    </location>
</feature>
<feature type="helix" evidence="15">
    <location>
        <begin position="160"/>
        <end position="162"/>
    </location>
</feature>
<feature type="helix" evidence="15">
    <location>
        <begin position="163"/>
        <end position="178"/>
    </location>
</feature>
<feature type="strand" evidence="15">
    <location>
        <begin position="182"/>
        <end position="190"/>
    </location>
</feature>
<feature type="helix" evidence="15">
    <location>
        <begin position="194"/>
        <end position="206"/>
    </location>
</feature>
<feature type="helix" evidence="15">
    <location>
        <begin position="209"/>
        <end position="214"/>
    </location>
</feature>
<feature type="helix" evidence="15">
    <location>
        <begin position="216"/>
        <end position="233"/>
    </location>
</feature>
<feature type="strand" evidence="14">
    <location>
        <begin position="235"/>
        <end position="238"/>
    </location>
</feature>
<feature type="turn" evidence="15">
    <location>
        <begin position="240"/>
        <end position="242"/>
    </location>
</feature>
<feature type="strand" evidence="15">
    <location>
        <begin position="243"/>
        <end position="245"/>
    </location>
</feature>
<feature type="helix" evidence="15">
    <location>
        <begin position="246"/>
        <end position="257"/>
    </location>
</feature>
<feature type="helix" evidence="15">
    <location>
        <begin position="260"/>
        <end position="283"/>
    </location>
</feature>
<feature type="strand" evidence="15">
    <location>
        <begin position="289"/>
        <end position="293"/>
    </location>
</feature>
<feature type="helix" evidence="15">
    <location>
        <begin position="294"/>
        <end position="296"/>
    </location>
</feature>
<feature type="helix" evidence="15">
    <location>
        <begin position="299"/>
        <end position="311"/>
    </location>
</feature>
<feature type="strand" evidence="15">
    <location>
        <begin position="315"/>
        <end position="318"/>
    </location>
</feature>
<feature type="strand" evidence="15">
    <location>
        <begin position="321"/>
        <end position="325"/>
    </location>
</feature>
<feature type="helix" evidence="15">
    <location>
        <begin position="326"/>
        <end position="328"/>
    </location>
</feature>
<feature type="turn" evidence="15">
    <location>
        <begin position="331"/>
        <end position="333"/>
    </location>
</feature>
<feature type="strand" evidence="15">
    <location>
        <begin position="335"/>
        <end position="339"/>
    </location>
</feature>
<feature type="turn" evidence="14">
    <location>
        <begin position="341"/>
        <end position="343"/>
    </location>
</feature>
<feature type="helix" evidence="15">
    <location>
        <begin position="347"/>
        <end position="362"/>
    </location>
</feature>
<feature type="strand" evidence="15">
    <location>
        <begin position="365"/>
        <end position="370"/>
    </location>
</feature>
<feature type="helix" evidence="15">
    <location>
        <begin position="373"/>
        <end position="375"/>
    </location>
</feature>
<feature type="helix" evidence="15">
    <location>
        <begin position="376"/>
        <end position="388"/>
    </location>
</feature>
<feature type="helix" evidence="15">
    <location>
        <begin position="392"/>
        <end position="396"/>
    </location>
</feature>
<feature type="strand" evidence="15">
    <location>
        <begin position="397"/>
        <end position="400"/>
    </location>
</feature>
<feature type="strand" evidence="15">
    <location>
        <begin position="405"/>
        <end position="407"/>
    </location>
</feature>
<feature type="turn" evidence="15">
    <location>
        <begin position="410"/>
        <end position="413"/>
    </location>
</feature>
<feature type="helix" evidence="15">
    <location>
        <begin position="418"/>
        <end position="434"/>
    </location>
</feature>
<feature type="helix" evidence="15">
    <location>
        <begin position="437"/>
        <end position="440"/>
    </location>
</feature>
<feature type="helix" evidence="15">
    <location>
        <begin position="446"/>
        <end position="463"/>
    </location>
</feature>
<feature type="helix" evidence="15">
    <location>
        <begin position="475"/>
        <end position="479"/>
    </location>
</feature>
<feature type="strand" evidence="15">
    <location>
        <begin position="482"/>
        <end position="485"/>
    </location>
</feature>
<feature type="helix" evidence="15">
    <location>
        <begin position="486"/>
        <end position="502"/>
    </location>
</feature>
<feature type="turn" evidence="15">
    <location>
        <begin position="503"/>
        <end position="505"/>
    </location>
</feature>
<feature type="helix" evidence="15">
    <location>
        <begin position="508"/>
        <end position="511"/>
    </location>
</feature>
<feature type="helix" evidence="15">
    <location>
        <begin position="516"/>
        <end position="518"/>
    </location>
</feature>
<feature type="helix" evidence="15">
    <location>
        <begin position="522"/>
        <end position="531"/>
    </location>
</feature>
<feature type="helix" evidence="15">
    <location>
        <begin position="534"/>
        <end position="544"/>
    </location>
</feature>
<feature type="helix" evidence="15">
    <location>
        <begin position="547"/>
        <end position="567"/>
    </location>
</feature>
<feature type="helix" evidence="15">
    <location>
        <begin position="575"/>
        <end position="599"/>
    </location>
</feature>
<gene>
    <name type="ordered locus">YDR341C</name>
    <name type="ORF">D9651.10</name>
</gene>
<name>SYRC_YEAST</name>
<reference key="1">
    <citation type="journal article" date="1997" name="Nature">
        <title>The nucleotide sequence of Saccharomyces cerevisiae chromosome IV.</title>
        <authorList>
            <person name="Jacq C."/>
            <person name="Alt-Moerbe J."/>
            <person name="Andre B."/>
            <person name="Arnold W."/>
            <person name="Bahr A."/>
            <person name="Ballesta J.P.G."/>
            <person name="Bargues M."/>
            <person name="Baron L."/>
            <person name="Becker A."/>
            <person name="Biteau N."/>
            <person name="Bloecker H."/>
            <person name="Blugeon C."/>
            <person name="Boskovic J."/>
            <person name="Brandt P."/>
            <person name="Brueckner M."/>
            <person name="Buitrago M.J."/>
            <person name="Coster F."/>
            <person name="Delaveau T."/>
            <person name="del Rey F."/>
            <person name="Dujon B."/>
            <person name="Eide L.G."/>
            <person name="Garcia-Cantalejo J.M."/>
            <person name="Goffeau A."/>
            <person name="Gomez-Peris A."/>
            <person name="Granotier C."/>
            <person name="Hanemann V."/>
            <person name="Hankeln T."/>
            <person name="Hoheisel J.D."/>
            <person name="Jaeger W."/>
            <person name="Jimenez A."/>
            <person name="Jonniaux J.-L."/>
            <person name="Kraemer C."/>
            <person name="Kuester H."/>
            <person name="Laamanen P."/>
            <person name="Legros Y."/>
            <person name="Louis E.J."/>
            <person name="Moeller-Rieker S."/>
            <person name="Monnet A."/>
            <person name="Moro M."/>
            <person name="Mueller-Auer S."/>
            <person name="Nussbaumer B."/>
            <person name="Paricio N."/>
            <person name="Paulin L."/>
            <person name="Perea J."/>
            <person name="Perez-Alonso M."/>
            <person name="Perez-Ortin J.E."/>
            <person name="Pohl T.M."/>
            <person name="Prydz H."/>
            <person name="Purnelle B."/>
            <person name="Rasmussen S.W."/>
            <person name="Remacha M.A."/>
            <person name="Revuelta J.L."/>
            <person name="Rieger M."/>
            <person name="Salom D."/>
            <person name="Saluz H.P."/>
            <person name="Saiz J.E."/>
            <person name="Saren A.-M."/>
            <person name="Schaefer M."/>
            <person name="Scharfe M."/>
            <person name="Schmidt E.R."/>
            <person name="Schneider C."/>
            <person name="Scholler P."/>
            <person name="Schwarz S."/>
            <person name="Soler-Mira A."/>
            <person name="Urrestarazu L.A."/>
            <person name="Verhasselt P."/>
            <person name="Vissers S."/>
            <person name="Voet M."/>
            <person name="Volckaert G."/>
            <person name="Wagner G."/>
            <person name="Wambutt R."/>
            <person name="Wedler E."/>
            <person name="Wedler H."/>
            <person name="Woelfl S."/>
            <person name="Harris D.E."/>
            <person name="Bowman S."/>
            <person name="Brown D."/>
            <person name="Churcher C.M."/>
            <person name="Connor R."/>
            <person name="Dedman K."/>
            <person name="Gentles S."/>
            <person name="Hamlin N."/>
            <person name="Hunt S."/>
            <person name="Jones L."/>
            <person name="McDonald S."/>
            <person name="Murphy L.D."/>
            <person name="Niblett D."/>
            <person name="Odell C."/>
            <person name="Oliver K."/>
            <person name="Rajandream M.A."/>
            <person name="Richards C."/>
            <person name="Shore L."/>
            <person name="Walsh S.V."/>
            <person name="Barrell B.G."/>
            <person name="Dietrich F.S."/>
            <person name="Mulligan J.T."/>
            <person name="Allen E."/>
            <person name="Araujo R."/>
            <person name="Aviles E."/>
            <person name="Berno A."/>
            <person name="Carpenter J."/>
            <person name="Chen E."/>
            <person name="Cherry J.M."/>
            <person name="Chung E."/>
            <person name="Duncan M."/>
            <person name="Hunicke-Smith S."/>
            <person name="Hyman R.W."/>
            <person name="Komp C."/>
            <person name="Lashkari D."/>
            <person name="Lew H."/>
            <person name="Lin D."/>
            <person name="Mosedale D."/>
            <person name="Nakahara K."/>
            <person name="Namath A."/>
            <person name="Oefner P."/>
            <person name="Oh C."/>
            <person name="Petel F.X."/>
            <person name="Roberts D."/>
            <person name="Schramm S."/>
            <person name="Schroeder M."/>
            <person name="Shogren T."/>
            <person name="Shroff N."/>
            <person name="Winant A."/>
            <person name="Yelton M.A."/>
            <person name="Botstein D."/>
            <person name="Davis R.W."/>
            <person name="Johnston M."/>
            <person name="Andrews S."/>
            <person name="Brinkman R."/>
            <person name="Cooper J."/>
            <person name="Ding H."/>
            <person name="Du Z."/>
            <person name="Favello A."/>
            <person name="Fulton L."/>
            <person name="Gattung S."/>
            <person name="Greco T."/>
            <person name="Hallsworth K."/>
            <person name="Hawkins J."/>
            <person name="Hillier L.W."/>
            <person name="Jier M."/>
            <person name="Johnson D."/>
            <person name="Johnston L."/>
            <person name="Kirsten J."/>
            <person name="Kucaba T."/>
            <person name="Langston Y."/>
            <person name="Latreille P."/>
            <person name="Le T."/>
            <person name="Mardis E."/>
            <person name="Menezes S."/>
            <person name="Miller N."/>
            <person name="Nhan M."/>
            <person name="Pauley A."/>
            <person name="Peluso D."/>
            <person name="Rifkin L."/>
            <person name="Riles L."/>
            <person name="Taich A."/>
            <person name="Trevaskis E."/>
            <person name="Vignati D."/>
            <person name="Wilcox L."/>
            <person name="Wohldman P."/>
            <person name="Vaudin M."/>
            <person name="Wilson R."/>
            <person name="Waterston R."/>
            <person name="Albermann K."/>
            <person name="Hani J."/>
            <person name="Heumann K."/>
            <person name="Kleine K."/>
            <person name="Mewes H.-W."/>
            <person name="Zollner A."/>
            <person name="Zaccaria P."/>
        </authorList>
    </citation>
    <scope>NUCLEOTIDE SEQUENCE [LARGE SCALE GENOMIC DNA]</scope>
    <source>
        <strain>ATCC 204508 / S288c</strain>
    </source>
</reference>
<reference key="2">
    <citation type="journal article" date="2014" name="G3 (Bethesda)">
        <title>The reference genome sequence of Saccharomyces cerevisiae: Then and now.</title>
        <authorList>
            <person name="Engel S.R."/>
            <person name="Dietrich F.S."/>
            <person name="Fisk D.G."/>
            <person name="Binkley G."/>
            <person name="Balakrishnan R."/>
            <person name="Costanzo M.C."/>
            <person name="Dwight S.S."/>
            <person name="Hitz B.C."/>
            <person name="Karra K."/>
            <person name="Nash R.S."/>
            <person name="Weng S."/>
            <person name="Wong E.D."/>
            <person name="Lloyd P."/>
            <person name="Skrzypek M.S."/>
            <person name="Miyasato S.R."/>
            <person name="Simison M."/>
            <person name="Cherry J.M."/>
        </authorList>
    </citation>
    <scope>GENOME REANNOTATION</scope>
    <source>
        <strain>ATCC 204508 / S288c</strain>
    </source>
</reference>
<reference key="3">
    <citation type="journal article" date="2003" name="Nature">
        <title>Global analysis of protein expression in yeast.</title>
        <authorList>
            <person name="Ghaemmaghami S."/>
            <person name="Huh W.-K."/>
            <person name="Bower K."/>
            <person name="Howson R.W."/>
            <person name="Belle A."/>
            <person name="Dephoure N."/>
            <person name="O'Shea E.K."/>
            <person name="Weissman J.S."/>
        </authorList>
    </citation>
    <scope>LEVEL OF PROTEIN EXPRESSION [LARGE SCALE ANALYSIS]</scope>
</reference>
<reference key="4">
    <citation type="journal article" date="2007" name="J. Proteome Res.">
        <title>Large-scale phosphorylation analysis of alpha-factor-arrested Saccharomyces cerevisiae.</title>
        <authorList>
            <person name="Li X."/>
            <person name="Gerber S.A."/>
            <person name="Rudner A.D."/>
            <person name="Beausoleil S.A."/>
            <person name="Haas W."/>
            <person name="Villen J."/>
            <person name="Elias J.E."/>
            <person name="Gygi S.P."/>
        </authorList>
    </citation>
    <scope>PHOSPHORYLATION [LARGE SCALE ANALYSIS] AT SER-15</scope>
    <scope>IDENTIFICATION BY MASS SPECTROMETRY [LARGE SCALE ANALYSIS]</scope>
    <source>
        <strain>ADR376</strain>
    </source>
</reference>
<reference key="5">
    <citation type="journal article" date="2008" name="Mol. Cell. Proteomics">
        <title>A multidimensional chromatography technology for in-depth phosphoproteome analysis.</title>
        <authorList>
            <person name="Albuquerque C.P."/>
            <person name="Smolka M.B."/>
            <person name="Payne S.H."/>
            <person name="Bafna V."/>
            <person name="Eng J."/>
            <person name="Zhou H."/>
        </authorList>
    </citation>
    <scope>PHOSPHORYLATION [LARGE SCALE ANALYSIS] AT SER-15</scope>
    <scope>IDENTIFICATION BY MASS SPECTROMETRY [LARGE SCALE ANALYSIS]</scope>
</reference>
<reference key="6">
    <citation type="journal article" date="2009" name="Science">
        <title>Global analysis of Cdk1 substrate phosphorylation sites provides insights into evolution.</title>
        <authorList>
            <person name="Holt L.J."/>
            <person name="Tuch B.B."/>
            <person name="Villen J."/>
            <person name="Johnson A.D."/>
            <person name="Gygi S.P."/>
            <person name="Morgan D.O."/>
        </authorList>
    </citation>
    <scope>PHOSPHORYLATION [LARGE SCALE ANALYSIS] AT SER-15</scope>
    <scope>IDENTIFICATION BY MASS SPECTROMETRY [LARGE SCALE ANALYSIS]</scope>
</reference>
<reference key="7">
    <citation type="journal article" date="2012" name="Proc. Natl. Acad. Sci. U.S.A.">
        <title>N-terminal acetylome analyses and functional insights of the N-terminal acetyltransferase NatB.</title>
        <authorList>
            <person name="Van Damme P."/>
            <person name="Lasa M."/>
            <person name="Polevoda B."/>
            <person name="Gazquez C."/>
            <person name="Elosegui-Artola A."/>
            <person name="Kim D.S."/>
            <person name="De Juan-Pardo E."/>
            <person name="Demeyer K."/>
            <person name="Hole K."/>
            <person name="Larrea E."/>
            <person name="Timmerman E."/>
            <person name="Prieto J."/>
            <person name="Arnesen T."/>
            <person name="Sherman F."/>
            <person name="Gevaert K."/>
            <person name="Aldabe R."/>
        </authorList>
    </citation>
    <scope>ACETYLATION [LARGE SCALE ANALYSIS] AT ALA-2</scope>
    <scope>CLEAVAGE OF INITIATOR METHIONINE [LARGE SCALE ANALYSIS]</scope>
    <scope>IDENTIFICATION BY MASS SPECTROMETRY [LARGE SCALE ANALYSIS]</scope>
</reference>
<reference evidence="7" key="8">
    <citation type="journal article" date="1998" name="EMBO J.">
        <title>L-arginine recognition by yeast arginyl-tRNA synthetase.</title>
        <authorList>
            <person name="Cavarelli J."/>
            <person name="Delagoutte B."/>
            <person name="Eriani G."/>
            <person name="Gangloff J."/>
            <person name="Moras D."/>
        </authorList>
    </citation>
    <scope>X-RAY CRYSTALLOGRAPHY (2.75 ANGSTROMS) IN COMPLEX WITH L-ARGININE</scope>
    <scope>SUBUNIT</scope>
</reference>
<reference evidence="8 9" key="9">
    <citation type="journal article" date="2000" name="EMBO J.">
        <title>tRNA aminoacylation by arginyl-tRNA synthetase: induced conformations during substrates binding.</title>
        <authorList>
            <person name="Delagoutte B."/>
            <person name="Moras D."/>
            <person name="Cavarelli J."/>
        </authorList>
    </citation>
    <scope>X-RAY CRYSTALLOGRAPHY (2.20 ANGSTROMS) IN COMPLEX WITH L-ARGININE AND RNA</scope>
</reference>
<comment type="function">
    <text evidence="1">Forms part of a macromolecular complex that catalyzes the attachment of specific amino acids to cognate tRNAs during protein synthesis.</text>
</comment>
<comment type="catalytic activity">
    <reaction>
        <text>tRNA(Arg) + L-arginine + ATP = L-arginyl-tRNA(Arg) + AMP + diphosphate</text>
        <dbReference type="Rhea" id="RHEA:20301"/>
        <dbReference type="Rhea" id="RHEA-COMP:9658"/>
        <dbReference type="Rhea" id="RHEA-COMP:9673"/>
        <dbReference type="ChEBI" id="CHEBI:30616"/>
        <dbReference type="ChEBI" id="CHEBI:32682"/>
        <dbReference type="ChEBI" id="CHEBI:33019"/>
        <dbReference type="ChEBI" id="CHEBI:78442"/>
        <dbReference type="ChEBI" id="CHEBI:78513"/>
        <dbReference type="ChEBI" id="CHEBI:456215"/>
        <dbReference type="EC" id="6.1.1.19"/>
    </reaction>
</comment>
<comment type="subunit">
    <text evidence="5">Monomer.</text>
</comment>
<comment type="subcellular location">
    <subcellularLocation>
        <location evidence="2">Cytoplasm</location>
    </subcellularLocation>
    <subcellularLocation>
        <location evidence="2">Cytoplasm</location>
        <location evidence="2">Cytosol</location>
    </subcellularLocation>
</comment>
<comment type="miscellaneous">
    <text evidence="4">Present with 20600 molecules/cell in log phase SD medium.</text>
</comment>
<comment type="similarity">
    <text evidence="6">Belongs to the class-I aminoacyl-tRNA synthetase family.</text>
</comment>
<sequence length="607" mass="69525">MASTANMISQLKKLSIAEPAVAKDSHPDVNIVDLMRNYISQELSKISGVDSSLIFPALEWTNTMERGDLLIPIPRLRIKGANPKDLAVQWAEKFPCGDFLEKVEANGPFIQFFFNPQFLAKLVIPDILTRKEDYGSCKLVENKKVIIEFSSPNIAKPFHAGHLRSTIIGGFLANLYEKLGWEVIRMNYLGDWGKQFGLLAVGFERYGNEEALVKDPIHHLFDVYVRINKDIEEEGDSIPLEQSTNGKAREYFKRMEDGDEEALKIWKRFREFSIEKYIDTYARLNIKYDVYSGESQVSKESMLKAIDLFKEKGLTHEDKGAVLIDLTKFNKKLGKAIVQKSDGTTLYLTRDVGAAMDRYEKYHFDKMIYVIASQQDLHAAQFFEILKQMGFEWAKDLQHVNFGMVQGMSTRKGTVVFLDNILEETKEKMHEVMKKNENKYAQIEHPEEVADLVGISAVMIQDMQGKRINNYEFKWERMLSFEGDTGPYLQYAHSRLRSVERNASGITQEKWINADFSLLKEPAAKLLIRLLGQYPDVLRNAIKTHEPTTVVTYLFKLTHQVSSCYDVLWVAGQTEELATARLALYGAARQVLYNGMRLLGLTPVERM</sequence>
<keyword id="KW-0002">3D-structure</keyword>
<keyword id="KW-0007">Acetylation</keyword>
<keyword id="KW-0030">Aminoacyl-tRNA synthetase</keyword>
<keyword id="KW-0067">ATP-binding</keyword>
<keyword id="KW-0963">Cytoplasm</keyword>
<keyword id="KW-0436">Ligase</keyword>
<keyword id="KW-0547">Nucleotide-binding</keyword>
<keyword id="KW-0597">Phosphoprotein</keyword>
<keyword id="KW-0648">Protein biosynthesis</keyword>
<keyword id="KW-1185">Reference proteome</keyword>
<dbReference type="EC" id="6.1.1.19"/>
<dbReference type="EMBL" id="U51032">
    <property type="protein sequence ID" value="AAB64777.1"/>
    <property type="molecule type" value="Genomic_DNA"/>
</dbReference>
<dbReference type="EMBL" id="BK006938">
    <property type="protein sequence ID" value="DAA12182.1"/>
    <property type="molecule type" value="Genomic_DNA"/>
</dbReference>
<dbReference type="PIR" id="S70106">
    <property type="entry name" value="S70106"/>
</dbReference>
<dbReference type="PDB" id="1BS2">
    <property type="method" value="X-ray"/>
    <property type="resolution" value="2.75 A"/>
    <property type="chains" value="A=1-607"/>
</dbReference>
<dbReference type="PDB" id="1F7U">
    <property type="method" value="X-ray"/>
    <property type="resolution" value="2.20 A"/>
    <property type="chains" value="A=1-607"/>
</dbReference>
<dbReference type="PDB" id="1F7V">
    <property type="method" value="X-ray"/>
    <property type="resolution" value="2.90 A"/>
    <property type="chains" value="A=1-607"/>
</dbReference>
<dbReference type="PDBsum" id="1BS2"/>
<dbReference type="PDBsum" id="1F7U"/>
<dbReference type="PDBsum" id="1F7V"/>
<dbReference type="SMR" id="Q05506"/>
<dbReference type="BioGRID" id="32398">
    <property type="interactions" value="166"/>
</dbReference>
<dbReference type="DIP" id="DIP-5046N"/>
<dbReference type="FunCoup" id="Q05506">
    <property type="interactions" value="1191"/>
</dbReference>
<dbReference type="IntAct" id="Q05506">
    <property type="interactions" value="32"/>
</dbReference>
<dbReference type="STRING" id="4932.YDR341C"/>
<dbReference type="iPTMnet" id="Q05506"/>
<dbReference type="PaxDb" id="4932-YDR341C"/>
<dbReference type="PeptideAtlas" id="Q05506"/>
<dbReference type="TopDownProteomics" id="Q05506"/>
<dbReference type="EnsemblFungi" id="YDR341C_mRNA">
    <property type="protein sequence ID" value="YDR341C"/>
    <property type="gene ID" value="YDR341C"/>
</dbReference>
<dbReference type="GeneID" id="851942"/>
<dbReference type="KEGG" id="sce:YDR341C"/>
<dbReference type="AGR" id="SGD:S000002749"/>
<dbReference type="SGD" id="S000002749">
    <property type="gene designation" value="YDR341C"/>
</dbReference>
<dbReference type="VEuPathDB" id="FungiDB:YDR341C"/>
<dbReference type="eggNOG" id="KOG1195">
    <property type="taxonomic scope" value="Eukaryota"/>
</dbReference>
<dbReference type="GeneTree" id="ENSGT00530000063407"/>
<dbReference type="HOGENOM" id="CLU_006406_6_2_1"/>
<dbReference type="InParanoid" id="Q05506"/>
<dbReference type="OMA" id="YEFKWER"/>
<dbReference type="OrthoDB" id="68056at2759"/>
<dbReference type="BioCyc" id="YEAST:G3O-29896-MONOMER"/>
<dbReference type="BRENDA" id="6.1.1.19">
    <property type="organism ID" value="984"/>
</dbReference>
<dbReference type="BioGRID-ORCS" id="851942">
    <property type="hits" value="2 hits in 10 CRISPR screens"/>
</dbReference>
<dbReference type="CD-CODE" id="E03F929F">
    <property type="entry name" value="Stress granule"/>
</dbReference>
<dbReference type="EvolutionaryTrace" id="Q05506"/>
<dbReference type="PRO" id="PR:Q05506"/>
<dbReference type="Proteomes" id="UP000002311">
    <property type="component" value="Chromosome IV"/>
</dbReference>
<dbReference type="RNAct" id="Q05506">
    <property type="molecule type" value="protein"/>
</dbReference>
<dbReference type="GO" id="GO:0005829">
    <property type="term" value="C:cytosol"/>
    <property type="evidence" value="ECO:0007669"/>
    <property type="project" value="UniProtKB-SubCell"/>
</dbReference>
<dbReference type="GO" id="GO:0005739">
    <property type="term" value="C:mitochondrion"/>
    <property type="evidence" value="ECO:0007005"/>
    <property type="project" value="SGD"/>
</dbReference>
<dbReference type="GO" id="GO:0004814">
    <property type="term" value="F:arginine-tRNA ligase activity"/>
    <property type="evidence" value="ECO:0000314"/>
    <property type="project" value="SGD"/>
</dbReference>
<dbReference type="GO" id="GO:0005524">
    <property type="term" value="F:ATP binding"/>
    <property type="evidence" value="ECO:0007669"/>
    <property type="project" value="UniProtKB-KW"/>
</dbReference>
<dbReference type="GO" id="GO:1990825">
    <property type="term" value="F:sequence-specific mRNA binding"/>
    <property type="evidence" value="ECO:0000314"/>
    <property type="project" value="SGD"/>
</dbReference>
<dbReference type="GO" id="GO:0006420">
    <property type="term" value="P:arginyl-tRNA aminoacylation"/>
    <property type="evidence" value="ECO:0000314"/>
    <property type="project" value="SGD"/>
</dbReference>
<dbReference type="GO" id="GO:0032543">
    <property type="term" value="P:mitochondrial translation"/>
    <property type="evidence" value="ECO:0000318"/>
    <property type="project" value="GO_Central"/>
</dbReference>
<dbReference type="CDD" id="cd07956">
    <property type="entry name" value="Anticodon_Ia_Arg"/>
    <property type="match status" value="1"/>
</dbReference>
<dbReference type="CDD" id="cd00671">
    <property type="entry name" value="ArgRS_core"/>
    <property type="match status" value="1"/>
</dbReference>
<dbReference type="FunFam" id="3.30.1360.70:FF:000006">
    <property type="entry name" value="Arginyl-tRNA synthetase"/>
    <property type="match status" value="1"/>
</dbReference>
<dbReference type="FunFam" id="1.10.730.10:FF:000006">
    <property type="entry name" value="Arginyl-tRNA synthetase 2, mitochondrial"/>
    <property type="match status" value="1"/>
</dbReference>
<dbReference type="FunFam" id="3.40.50.620:FF:000058">
    <property type="entry name" value="Mitochondrial arginyl-tRNA synthetase"/>
    <property type="match status" value="1"/>
</dbReference>
<dbReference type="Gene3D" id="3.30.1360.70">
    <property type="entry name" value="Arginyl tRNA synthetase N-terminal domain"/>
    <property type="match status" value="1"/>
</dbReference>
<dbReference type="Gene3D" id="3.40.50.620">
    <property type="entry name" value="HUPs"/>
    <property type="match status" value="1"/>
</dbReference>
<dbReference type="Gene3D" id="1.10.730.10">
    <property type="entry name" value="Isoleucyl-tRNA Synthetase, Domain 1"/>
    <property type="match status" value="1"/>
</dbReference>
<dbReference type="HAMAP" id="MF_00123">
    <property type="entry name" value="Arg_tRNA_synth"/>
    <property type="match status" value="1"/>
</dbReference>
<dbReference type="InterPro" id="IPR001412">
    <property type="entry name" value="aa-tRNA-synth_I_CS"/>
</dbReference>
<dbReference type="InterPro" id="IPR001278">
    <property type="entry name" value="Arg-tRNA-ligase"/>
</dbReference>
<dbReference type="InterPro" id="IPR005148">
    <property type="entry name" value="Arg-tRNA-synth_N"/>
</dbReference>
<dbReference type="InterPro" id="IPR036695">
    <property type="entry name" value="Arg-tRNA-synth_N_sf"/>
</dbReference>
<dbReference type="InterPro" id="IPR035684">
    <property type="entry name" value="ArgRS_core"/>
</dbReference>
<dbReference type="InterPro" id="IPR008909">
    <property type="entry name" value="DALR_anticod-bd"/>
</dbReference>
<dbReference type="InterPro" id="IPR014729">
    <property type="entry name" value="Rossmann-like_a/b/a_fold"/>
</dbReference>
<dbReference type="InterPro" id="IPR009080">
    <property type="entry name" value="tRNAsynth_Ia_anticodon-bd"/>
</dbReference>
<dbReference type="NCBIfam" id="TIGR00456">
    <property type="entry name" value="argS"/>
    <property type="match status" value="1"/>
</dbReference>
<dbReference type="PANTHER" id="PTHR11956:SF11">
    <property type="entry name" value="ARGININE--TRNA LIGASE, MITOCHONDRIAL-RELATED"/>
    <property type="match status" value="1"/>
</dbReference>
<dbReference type="PANTHER" id="PTHR11956">
    <property type="entry name" value="ARGINYL-TRNA SYNTHETASE"/>
    <property type="match status" value="1"/>
</dbReference>
<dbReference type="Pfam" id="PF03485">
    <property type="entry name" value="Arg_tRNA_synt_N"/>
    <property type="match status" value="1"/>
</dbReference>
<dbReference type="Pfam" id="PF05746">
    <property type="entry name" value="DALR_1"/>
    <property type="match status" value="1"/>
</dbReference>
<dbReference type="Pfam" id="PF00750">
    <property type="entry name" value="tRNA-synt_1d"/>
    <property type="match status" value="1"/>
</dbReference>
<dbReference type="PRINTS" id="PR01038">
    <property type="entry name" value="TRNASYNTHARG"/>
</dbReference>
<dbReference type="SMART" id="SM01016">
    <property type="entry name" value="Arg_tRNA_synt_N"/>
    <property type="match status" value="1"/>
</dbReference>
<dbReference type="SMART" id="SM00836">
    <property type="entry name" value="DALR_1"/>
    <property type="match status" value="1"/>
</dbReference>
<dbReference type="SUPFAM" id="SSF47323">
    <property type="entry name" value="Anticodon-binding domain of a subclass of class I aminoacyl-tRNA synthetases"/>
    <property type="match status" value="1"/>
</dbReference>
<dbReference type="SUPFAM" id="SSF55190">
    <property type="entry name" value="Arginyl-tRNA synthetase (ArgRS), N-terminal 'additional' domain"/>
    <property type="match status" value="1"/>
</dbReference>
<dbReference type="SUPFAM" id="SSF52374">
    <property type="entry name" value="Nucleotidylyl transferase"/>
    <property type="match status" value="1"/>
</dbReference>
<dbReference type="PROSITE" id="PS00178">
    <property type="entry name" value="AA_TRNA_LIGASE_I"/>
    <property type="match status" value="1"/>
</dbReference>
<protein>
    <recommendedName>
        <fullName>Arginine--tRNA ligase, cytoplasmic</fullName>
        <ecNumber>6.1.1.19</ecNumber>
    </recommendedName>
    <alternativeName>
        <fullName>Arginyl-tRNA synthetase</fullName>
        <shortName>ArgRS</shortName>
    </alternativeName>
</protein>
<accession>Q05506</accession>
<accession>D6VSX2</accession>
<evidence type="ECO:0000250" key="1"/>
<evidence type="ECO:0000250" key="2">
    <source>
        <dbReference type="UniProtKB" id="P54136"/>
    </source>
</evidence>
<evidence type="ECO:0000269" key="3">
    <source>
    </source>
</evidence>
<evidence type="ECO:0000269" key="4">
    <source>
    </source>
</evidence>
<evidence type="ECO:0000269" key="5">
    <source>
    </source>
</evidence>
<evidence type="ECO:0000305" key="6"/>
<evidence type="ECO:0007744" key="7">
    <source>
        <dbReference type="PDB" id="1BS2"/>
    </source>
</evidence>
<evidence type="ECO:0007744" key="8">
    <source>
        <dbReference type="PDB" id="1F7U"/>
    </source>
</evidence>
<evidence type="ECO:0007744" key="9">
    <source>
        <dbReference type="PDB" id="1F7V"/>
    </source>
</evidence>
<evidence type="ECO:0007744" key="10">
    <source>
    </source>
</evidence>
<evidence type="ECO:0007744" key="11">
    <source>
    </source>
</evidence>
<evidence type="ECO:0007744" key="12">
    <source>
    </source>
</evidence>
<evidence type="ECO:0007744" key="13">
    <source>
    </source>
</evidence>
<evidence type="ECO:0007829" key="14">
    <source>
        <dbReference type="PDB" id="1BS2"/>
    </source>
</evidence>
<evidence type="ECO:0007829" key="15">
    <source>
        <dbReference type="PDB" id="1F7U"/>
    </source>
</evidence>